<gene>
    <name evidence="1" type="primary">rplR</name>
    <name type="ordered locus">BCB4264_A0147</name>
</gene>
<accession>B7HJ64</accession>
<dbReference type="EMBL" id="CP001176">
    <property type="protein sequence ID" value="ACK61832.1"/>
    <property type="molecule type" value="Genomic_DNA"/>
</dbReference>
<dbReference type="RefSeq" id="WP_000628816.1">
    <property type="nucleotide sequence ID" value="NZ_VEHB01000017.1"/>
</dbReference>
<dbReference type="SMR" id="B7HJ64"/>
<dbReference type="GeneID" id="93010927"/>
<dbReference type="KEGG" id="bcb:BCB4264_A0147"/>
<dbReference type="HOGENOM" id="CLU_098841_0_1_9"/>
<dbReference type="Proteomes" id="UP000007096">
    <property type="component" value="Chromosome"/>
</dbReference>
<dbReference type="GO" id="GO:0022625">
    <property type="term" value="C:cytosolic large ribosomal subunit"/>
    <property type="evidence" value="ECO:0007669"/>
    <property type="project" value="TreeGrafter"/>
</dbReference>
<dbReference type="GO" id="GO:0008097">
    <property type="term" value="F:5S rRNA binding"/>
    <property type="evidence" value="ECO:0007669"/>
    <property type="project" value="TreeGrafter"/>
</dbReference>
<dbReference type="GO" id="GO:0003735">
    <property type="term" value="F:structural constituent of ribosome"/>
    <property type="evidence" value="ECO:0007669"/>
    <property type="project" value="InterPro"/>
</dbReference>
<dbReference type="GO" id="GO:0006412">
    <property type="term" value="P:translation"/>
    <property type="evidence" value="ECO:0007669"/>
    <property type="project" value="UniProtKB-UniRule"/>
</dbReference>
<dbReference type="CDD" id="cd00432">
    <property type="entry name" value="Ribosomal_L18_L5e"/>
    <property type="match status" value="1"/>
</dbReference>
<dbReference type="FunFam" id="3.30.420.100:FF:000001">
    <property type="entry name" value="50S ribosomal protein L18"/>
    <property type="match status" value="1"/>
</dbReference>
<dbReference type="Gene3D" id="3.30.420.100">
    <property type="match status" value="1"/>
</dbReference>
<dbReference type="HAMAP" id="MF_01337_B">
    <property type="entry name" value="Ribosomal_uL18_B"/>
    <property type="match status" value="1"/>
</dbReference>
<dbReference type="InterPro" id="IPR004389">
    <property type="entry name" value="Ribosomal_uL18_bac-type"/>
</dbReference>
<dbReference type="InterPro" id="IPR005484">
    <property type="entry name" value="Ribosomal_uL18_bac/euk"/>
</dbReference>
<dbReference type="NCBIfam" id="TIGR00060">
    <property type="entry name" value="L18_bact"/>
    <property type="match status" value="1"/>
</dbReference>
<dbReference type="PANTHER" id="PTHR12899">
    <property type="entry name" value="39S RIBOSOMAL PROTEIN L18, MITOCHONDRIAL"/>
    <property type="match status" value="1"/>
</dbReference>
<dbReference type="PANTHER" id="PTHR12899:SF3">
    <property type="entry name" value="LARGE RIBOSOMAL SUBUNIT PROTEIN UL18M"/>
    <property type="match status" value="1"/>
</dbReference>
<dbReference type="Pfam" id="PF00861">
    <property type="entry name" value="Ribosomal_L18p"/>
    <property type="match status" value="1"/>
</dbReference>
<dbReference type="SUPFAM" id="SSF53137">
    <property type="entry name" value="Translational machinery components"/>
    <property type="match status" value="1"/>
</dbReference>
<evidence type="ECO:0000255" key="1">
    <source>
        <dbReference type="HAMAP-Rule" id="MF_01337"/>
    </source>
</evidence>
<evidence type="ECO:0000305" key="2"/>
<sequence length="120" mass="13106">MITKADKNATRKKRHARVRAKLTGTAERPRLNVFRSNQHIYAQVIDDVNGVTLVSASTLDKDLALNGTSNIEAATKVGESVAKRAVEKGVKEVVFDRGGYLYHGRVKALAEAAREAGLQF</sequence>
<name>RL18_BACC4</name>
<organism>
    <name type="scientific">Bacillus cereus (strain B4264)</name>
    <dbReference type="NCBI Taxonomy" id="405532"/>
    <lineage>
        <taxon>Bacteria</taxon>
        <taxon>Bacillati</taxon>
        <taxon>Bacillota</taxon>
        <taxon>Bacilli</taxon>
        <taxon>Bacillales</taxon>
        <taxon>Bacillaceae</taxon>
        <taxon>Bacillus</taxon>
        <taxon>Bacillus cereus group</taxon>
    </lineage>
</organism>
<comment type="function">
    <text evidence="1">This is one of the proteins that bind and probably mediate the attachment of the 5S RNA into the large ribosomal subunit, where it forms part of the central protuberance.</text>
</comment>
<comment type="subunit">
    <text evidence="1">Part of the 50S ribosomal subunit; part of the 5S rRNA/L5/L18/L25 subcomplex. Contacts the 5S and 23S rRNAs.</text>
</comment>
<comment type="similarity">
    <text evidence="1">Belongs to the universal ribosomal protein uL18 family.</text>
</comment>
<reference key="1">
    <citation type="submission" date="2008-10" db="EMBL/GenBank/DDBJ databases">
        <title>Genome sequence of Bacillus cereus B4264.</title>
        <authorList>
            <person name="Dodson R.J."/>
            <person name="Durkin A.S."/>
            <person name="Rosovitz M.J."/>
            <person name="Rasko D.A."/>
            <person name="Hoffmaster A."/>
            <person name="Ravel J."/>
            <person name="Sutton G."/>
        </authorList>
    </citation>
    <scope>NUCLEOTIDE SEQUENCE [LARGE SCALE GENOMIC DNA]</scope>
    <source>
        <strain>B4264</strain>
    </source>
</reference>
<proteinExistence type="inferred from homology"/>
<feature type="chain" id="PRO_1000142618" description="Large ribosomal subunit protein uL18">
    <location>
        <begin position="1"/>
        <end position="120"/>
    </location>
</feature>
<protein>
    <recommendedName>
        <fullName evidence="1">Large ribosomal subunit protein uL18</fullName>
    </recommendedName>
    <alternativeName>
        <fullName evidence="2">50S ribosomal protein L18</fullName>
    </alternativeName>
</protein>
<keyword id="KW-0687">Ribonucleoprotein</keyword>
<keyword id="KW-0689">Ribosomal protein</keyword>
<keyword id="KW-0694">RNA-binding</keyword>
<keyword id="KW-0699">rRNA-binding</keyword>